<dbReference type="EMBL" id="CP000512">
    <property type="protein sequence ID" value="ABM33995.1"/>
    <property type="molecule type" value="Genomic_DNA"/>
</dbReference>
<dbReference type="RefSeq" id="WP_011796493.1">
    <property type="nucleotide sequence ID" value="NC_008752.1"/>
</dbReference>
<dbReference type="SMR" id="A1TSQ7"/>
<dbReference type="STRING" id="397945.Aave_3438"/>
<dbReference type="GeneID" id="79791675"/>
<dbReference type="KEGG" id="aav:Aave_3438"/>
<dbReference type="eggNOG" id="COG3132">
    <property type="taxonomic scope" value="Bacteria"/>
</dbReference>
<dbReference type="HOGENOM" id="CLU_057831_0_0_4"/>
<dbReference type="OrthoDB" id="9784785at2"/>
<dbReference type="Proteomes" id="UP000002596">
    <property type="component" value="Chromosome"/>
</dbReference>
<dbReference type="Gene3D" id="1.10.10.10">
    <property type="entry name" value="Winged helix-like DNA-binding domain superfamily/Winged helix DNA-binding domain"/>
    <property type="match status" value="2"/>
</dbReference>
<dbReference type="HAMAP" id="MF_01584">
    <property type="entry name" value="UPF0502"/>
    <property type="match status" value="1"/>
</dbReference>
<dbReference type="InterPro" id="IPR007432">
    <property type="entry name" value="DUF480"/>
</dbReference>
<dbReference type="InterPro" id="IPR036388">
    <property type="entry name" value="WH-like_DNA-bd_sf"/>
</dbReference>
<dbReference type="InterPro" id="IPR036390">
    <property type="entry name" value="WH_DNA-bd_sf"/>
</dbReference>
<dbReference type="PANTHER" id="PTHR38768">
    <property type="entry name" value="UPF0502 PROTEIN YCEH"/>
    <property type="match status" value="1"/>
</dbReference>
<dbReference type="PANTHER" id="PTHR38768:SF1">
    <property type="entry name" value="UPF0502 PROTEIN YCEH"/>
    <property type="match status" value="1"/>
</dbReference>
<dbReference type="Pfam" id="PF04337">
    <property type="entry name" value="DUF480"/>
    <property type="match status" value="1"/>
</dbReference>
<dbReference type="SUPFAM" id="SSF46785">
    <property type="entry name" value="Winged helix' DNA-binding domain"/>
    <property type="match status" value="2"/>
</dbReference>
<reference key="1">
    <citation type="submission" date="2006-12" db="EMBL/GenBank/DDBJ databases">
        <title>Complete sequence of Acidovorax avenae subsp. citrulli AAC00-1.</title>
        <authorList>
            <person name="Copeland A."/>
            <person name="Lucas S."/>
            <person name="Lapidus A."/>
            <person name="Barry K."/>
            <person name="Detter J.C."/>
            <person name="Glavina del Rio T."/>
            <person name="Dalin E."/>
            <person name="Tice H."/>
            <person name="Pitluck S."/>
            <person name="Kiss H."/>
            <person name="Brettin T."/>
            <person name="Bruce D."/>
            <person name="Han C."/>
            <person name="Tapia R."/>
            <person name="Gilna P."/>
            <person name="Schmutz J."/>
            <person name="Larimer F."/>
            <person name="Land M."/>
            <person name="Hauser L."/>
            <person name="Kyrpides N."/>
            <person name="Kim E."/>
            <person name="Stahl D."/>
            <person name="Richardson P."/>
        </authorList>
    </citation>
    <scope>NUCLEOTIDE SEQUENCE [LARGE SCALE GENOMIC DNA]</scope>
    <source>
        <strain>AAC00-1</strain>
    </source>
</reference>
<proteinExistence type="inferred from homology"/>
<accession>A1TSQ7</accession>
<comment type="similarity">
    <text evidence="1">Belongs to the UPF0502 family.</text>
</comment>
<protein>
    <recommendedName>
        <fullName evidence="1">UPF0502 protein Aave_3438</fullName>
    </recommendedName>
</protein>
<sequence length="232" mass="24562">MPFDPRLQPLTAAEARVLGTLMEKARTVPDSYPLTLNAVVTGCNQKSSRDPVTTLSDAEVQEALDSLRRRAMVVEIGGQRATRWEHNFTRAAGVPDQSAALLGLLMLRGPQTAGELRINAERWHRFADISSVEAFLDELQSRSEEKGGPLVALLPRAPGARESRWTHLLCGPLSAADMAAQAAQAAAPTSSARAADPALAERVAALEAEVAALRGSLAALCGQLGVSLPGQP</sequence>
<organism>
    <name type="scientific">Paracidovorax citrulli (strain AAC00-1)</name>
    <name type="common">Acidovorax citrulli</name>
    <dbReference type="NCBI Taxonomy" id="397945"/>
    <lineage>
        <taxon>Bacteria</taxon>
        <taxon>Pseudomonadati</taxon>
        <taxon>Pseudomonadota</taxon>
        <taxon>Betaproteobacteria</taxon>
        <taxon>Burkholderiales</taxon>
        <taxon>Comamonadaceae</taxon>
        <taxon>Paracidovorax</taxon>
    </lineage>
</organism>
<name>Y3438_PARC0</name>
<evidence type="ECO:0000255" key="1">
    <source>
        <dbReference type="HAMAP-Rule" id="MF_01584"/>
    </source>
</evidence>
<gene>
    <name type="ordered locus">Aave_3438</name>
</gene>
<feature type="chain" id="PRO_0000309366" description="UPF0502 protein Aave_3438">
    <location>
        <begin position="1"/>
        <end position="232"/>
    </location>
</feature>